<evidence type="ECO:0000250" key="1"/>
<evidence type="ECO:0000250" key="2">
    <source>
        <dbReference type="UniProtKB" id="P60010"/>
    </source>
</evidence>
<evidence type="ECO:0000269" key="3">
    <source>
    </source>
</evidence>
<evidence type="ECO:0000305" key="4"/>
<proteinExistence type="evidence at protein level"/>
<reference key="1">
    <citation type="journal article" date="2001" name="Genome Res.">
        <title>Sequence and analysis of chromosome I of the amitochondriate intracellular parasite Encephalitozoon cuniculi (Microspora).</title>
        <authorList>
            <person name="Peyret P."/>
            <person name="Katinka M.D."/>
            <person name="Duprat S."/>
            <person name="Duffieux F."/>
            <person name="Barbe V."/>
            <person name="Barbazanges M."/>
            <person name="Weissenbach J."/>
            <person name="Saurin W."/>
            <person name="Vivares C.P."/>
        </authorList>
    </citation>
    <scope>NUCLEOTIDE SEQUENCE [LARGE SCALE GENOMIC DNA]</scope>
    <source>
        <strain>GB-M1</strain>
    </source>
</reference>
<reference key="2">
    <citation type="journal article" date="2009" name="BMC Genomics">
        <title>Identification of transcriptional signals in Encephalitozoon cuniculi widespread among Microsporidia phylum: support for accurate structural genome annotation.</title>
        <authorList>
            <person name="Peyretaillade E."/>
            <person name="Goncalves O."/>
            <person name="Terrat S."/>
            <person name="Dugat-Bony E."/>
            <person name="Wincker P."/>
            <person name="Cornman R.S."/>
            <person name="Evans J.D."/>
            <person name="Delbac F."/>
            <person name="Peyret P."/>
        </authorList>
    </citation>
    <scope>GENOME REANNOTATION</scope>
    <source>
        <strain>GB-M1</strain>
    </source>
</reference>
<reference key="3">
    <citation type="journal article" date="2001" name="Nature">
        <title>Genome sequence and gene compaction of the eukaryote parasite Encephalitozoon cuniculi.</title>
        <authorList>
            <person name="Katinka M.D."/>
            <person name="Duprat S."/>
            <person name="Cornillot E."/>
            <person name="Metenier G."/>
            <person name="Thomarat F."/>
            <person name="Prensier G."/>
            <person name="Barbe V."/>
            <person name="Peyretaillade E."/>
            <person name="Brottier P."/>
            <person name="Wincker P."/>
            <person name="Delbac F."/>
            <person name="El Alaoui H."/>
            <person name="Peyret P."/>
            <person name="Saurin W."/>
            <person name="Gouy M."/>
            <person name="Weissenbach J."/>
            <person name="Vivares C.P."/>
        </authorList>
    </citation>
    <scope>NUCLEOTIDE SEQUENCE [LARGE SCALE GENOMIC DNA]</scope>
    <source>
        <strain>GB-M1</strain>
    </source>
</reference>
<reference key="4">
    <citation type="journal article" date="2006" name="Proteomics">
        <title>Proteomic analysis of the eukaryotic parasite Encephalitozoon cuniculi (microsporidia): a reference map for proteins expressed in late sporogonial stages.</title>
        <authorList>
            <person name="Brosson D."/>
            <person name="Kuhn L."/>
            <person name="Delbac F."/>
            <person name="Garin J."/>
            <person name="Vivares C.P."/>
            <person name="Texier C."/>
        </authorList>
    </citation>
    <scope>IDENTIFICATION BY MASS SPECTROMETRY [LARGE SCALE ANALYSIS]</scope>
    <scope>DEVELOPMENTAL STAGE</scope>
</reference>
<organism>
    <name type="scientific">Encephalitozoon cuniculi (strain GB-M1)</name>
    <name type="common">Microsporidian parasite</name>
    <dbReference type="NCBI Taxonomy" id="284813"/>
    <lineage>
        <taxon>Eukaryota</taxon>
        <taxon>Fungi</taxon>
        <taxon>Fungi incertae sedis</taxon>
        <taxon>Microsporidia</taxon>
        <taxon>Unikaryonidae</taxon>
        <taxon>Encephalitozoon</taxon>
    </lineage>
</organism>
<dbReference type="EC" id="3.6.4.-" evidence="2"/>
<dbReference type="EMBL" id="AL391737">
    <property type="protein sequence ID" value="CAD24915.2"/>
    <property type="molecule type" value="Genomic_DNA"/>
</dbReference>
<dbReference type="RefSeq" id="NP_001402130.1">
    <property type="nucleotide sequence ID" value="NM_001415560.1"/>
</dbReference>
<dbReference type="RefSeq" id="XP_965880.1">
    <property type="nucleotide sequence ID" value="XM_960787.1"/>
</dbReference>
<dbReference type="SMR" id="Q8SWN8"/>
<dbReference type="FunCoup" id="Q8SWN8">
    <property type="interactions" value="90"/>
</dbReference>
<dbReference type="STRING" id="284813.Q8SWN8"/>
<dbReference type="GeneID" id="860220"/>
<dbReference type="VEuPathDB" id="MicrosporidiaDB:ECU01_0460"/>
<dbReference type="HOGENOM" id="CLU_027965_0_2_1"/>
<dbReference type="InParanoid" id="Q8SWN8"/>
<dbReference type="OrthoDB" id="5132116at2759"/>
<dbReference type="Proteomes" id="UP000000819">
    <property type="component" value="Chromosome I"/>
</dbReference>
<dbReference type="GO" id="GO:0005737">
    <property type="term" value="C:cytoplasm"/>
    <property type="evidence" value="ECO:0007669"/>
    <property type="project" value="UniProtKB-KW"/>
</dbReference>
<dbReference type="GO" id="GO:0005856">
    <property type="term" value="C:cytoskeleton"/>
    <property type="evidence" value="ECO:0007669"/>
    <property type="project" value="UniProtKB-SubCell"/>
</dbReference>
<dbReference type="GO" id="GO:0005524">
    <property type="term" value="F:ATP binding"/>
    <property type="evidence" value="ECO:0007669"/>
    <property type="project" value="UniProtKB-KW"/>
</dbReference>
<dbReference type="GO" id="GO:0016787">
    <property type="term" value="F:hydrolase activity"/>
    <property type="evidence" value="ECO:0007669"/>
    <property type="project" value="UniProtKB-KW"/>
</dbReference>
<dbReference type="FunFam" id="3.30.420.40:FF:000218">
    <property type="entry name" value="actin, alpha sarcomeric/skeletal-like"/>
    <property type="match status" value="1"/>
</dbReference>
<dbReference type="FunFam" id="3.30.420.40:FF:000291">
    <property type="entry name" value="Actin, alpha skeletal muscle"/>
    <property type="match status" value="1"/>
</dbReference>
<dbReference type="FunFam" id="3.90.640.10:FF:000047">
    <property type="entry name" value="Actin, alpha skeletal muscle"/>
    <property type="match status" value="1"/>
</dbReference>
<dbReference type="FunFam" id="3.30.420.40:FF:000058">
    <property type="entry name" value="Putative actin-related protein 5"/>
    <property type="match status" value="1"/>
</dbReference>
<dbReference type="Gene3D" id="3.30.420.40">
    <property type="match status" value="2"/>
</dbReference>
<dbReference type="Gene3D" id="3.90.640.10">
    <property type="entry name" value="Actin, Chain A, domain 4"/>
    <property type="match status" value="1"/>
</dbReference>
<dbReference type="InterPro" id="IPR004000">
    <property type="entry name" value="Actin"/>
</dbReference>
<dbReference type="InterPro" id="IPR020902">
    <property type="entry name" value="Actin/actin-like_CS"/>
</dbReference>
<dbReference type="InterPro" id="IPR004001">
    <property type="entry name" value="Actin_CS"/>
</dbReference>
<dbReference type="InterPro" id="IPR043129">
    <property type="entry name" value="ATPase_NBD"/>
</dbReference>
<dbReference type="PANTHER" id="PTHR11937">
    <property type="entry name" value="ACTIN"/>
    <property type="match status" value="1"/>
</dbReference>
<dbReference type="Pfam" id="PF00022">
    <property type="entry name" value="Actin"/>
    <property type="match status" value="1"/>
</dbReference>
<dbReference type="PRINTS" id="PR00190">
    <property type="entry name" value="ACTIN"/>
</dbReference>
<dbReference type="SMART" id="SM00268">
    <property type="entry name" value="ACTIN"/>
    <property type="match status" value="1"/>
</dbReference>
<dbReference type="SUPFAM" id="SSF53067">
    <property type="entry name" value="Actin-like ATPase domain"/>
    <property type="match status" value="2"/>
</dbReference>
<dbReference type="PROSITE" id="PS00406">
    <property type="entry name" value="ACTINS_1"/>
    <property type="match status" value="1"/>
</dbReference>
<dbReference type="PROSITE" id="PS01132">
    <property type="entry name" value="ACTINS_ACT_LIKE"/>
    <property type="match status" value="1"/>
</dbReference>
<keyword id="KW-0067">ATP-binding</keyword>
<keyword id="KW-0963">Cytoplasm</keyword>
<keyword id="KW-0206">Cytoskeleton</keyword>
<keyword id="KW-0378">Hydrolase</keyword>
<keyword id="KW-0547">Nucleotide-binding</keyword>
<keyword id="KW-1185">Reference proteome</keyword>
<accession>Q8SWN8</accession>
<feature type="chain" id="PRO_0000088937" description="Actin">
    <location>
        <begin position="1"/>
        <end position="375"/>
    </location>
</feature>
<name>ACT_ENCCU</name>
<gene>
    <name type="ordered locus">ECU01_0460</name>
</gene>
<protein>
    <recommendedName>
        <fullName>Actin</fullName>
        <ecNumber evidence="2">3.6.4.-</ecNumber>
    </recommendedName>
</protein>
<sequence length="375" mass="41993">MSEIVQALVIDIGSGVVKSGFAGDDAPRAVFPSIVGFPKHKGVMVGMGQKDAYVGDEAQTKRGILHIKYPIEHGIVNNWDDMEKIWHHTFYNELRVAPEEHPVLLTEAPLNPKANREKITQIMFETFNVPSFYISIQAVLSLYASGRTTGIVFDSGDGVSHVVPIYEGYSLPYAINRIDLAGRDLTDYLQLILTESGNSFTTTAEREIVRDIKEKLCYVSLNYEEDMRNTEHLASITKTYEMPDGQVISIGNERFRAPELLFQPKLRGLELKGIHQNIYDSIMKCDVDIRKELYGNIVLSGGTTMYPGLAERILNEIKALAPPVIKIGVVAPPERKYSVWIGGSILASLSTFQQMWVSKAEYQEHGPSIVHRKCF</sequence>
<comment type="function">
    <text evidence="1">Actins are highly conserved proteins that are involved in various types of cell motility and are ubiquitously expressed in all eukaryotic cells.</text>
</comment>
<comment type="catalytic activity">
    <reaction evidence="2">
        <text>ATP + H2O = ADP + phosphate + H(+)</text>
        <dbReference type="Rhea" id="RHEA:13065"/>
        <dbReference type="ChEBI" id="CHEBI:15377"/>
        <dbReference type="ChEBI" id="CHEBI:15378"/>
        <dbReference type="ChEBI" id="CHEBI:30616"/>
        <dbReference type="ChEBI" id="CHEBI:43474"/>
        <dbReference type="ChEBI" id="CHEBI:456216"/>
    </reaction>
</comment>
<comment type="subcellular location">
    <subcellularLocation>
        <location evidence="1">Cytoplasm</location>
        <location evidence="1">Cytoskeleton</location>
    </subcellularLocation>
</comment>
<comment type="developmental stage">
    <text evidence="3">Expressed in late sporogonial stages.</text>
</comment>
<comment type="similarity">
    <text evidence="4">Belongs to the actin family.</text>
</comment>